<dbReference type="EC" id="2.7.7.89" evidence="1"/>
<dbReference type="EC" id="2.7.7.42" evidence="1"/>
<dbReference type="EMBL" id="CU928164">
    <property type="protein sequence ID" value="CAR19665.1"/>
    <property type="molecule type" value="Genomic_DNA"/>
</dbReference>
<dbReference type="RefSeq" id="WP_001324258.1">
    <property type="nucleotide sequence ID" value="NC_011750.1"/>
</dbReference>
<dbReference type="RefSeq" id="YP_002409453.1">
    <property type="nucleotide sequence ID" value="NC_011750.1"/>
</dbReference>
<dbReference type="SMR" id="B7NJR6"/>
<dbReference type="STRING" id="585057.ECIAI39_3549"/>
<dbReference type="KEGG" id="ect:ECIAI39_3549"/>
<dbReference type="PATRIC" id="fig|585057.6.peg.3677"/>
<dbReference type="HOGENOM" id="CLU_006233_0_1_6"/>
<dbReference type="Proteomes" id="UP000000749">
    <property type="component" value="Chromosome"/>
</dbReference>
<dbReference type="GO" id="GO:0005829">
    <property type="term" value="C:cytosol"/>
    <property type="evidence" value="ECO:0007669"/>
    <property type="project" value="TreeGrafter"/>
</dbReference>
<dbReference type="GO" id="GO:0008882">
    <property type="term" value="F:[glutamate-ammonia-ligase] adenylyltransferase activity"/>
    <property type="evidence" value="ECO:0007669"/>
    <property type="project" value="UniProtKB-UniRule"/>
</dbReference>
<dbReference type="GO" id="GO:0047388">
    <property type="term" value="F:[glutamine synthetase]-adenylyl-L-tyrosine phosphorylase activity"/>
    <property type="evidence" value="ECO:0007669"/>
    <property type="project" value="UniProtKB-EC"/>
</dbReference>
<dbReference type="GO" id="GO:0005524">
    <property type="term" value="F:ATP binding"/>
    <property type="evidence" value="ECO:0007669"/>
    <property type="project" value="UniProtKB-UniRule"/>
</dbReference>
<dbReference type="GO" id="GO:0000287">
    <property type="term" value="F:magnesium ion binding"/>
    <property type="evidence" value="ECO:0007669"/>
    <property type="project" value="UniProtKB-UniRule"/>
</dbReference>
<dbReference type="GO" id="GO:0000820">
    <property type="term" value="P:regulation of glutamine family amino acid metabolic process"/>
    <property type="evidence" value="ECO:0007669"/>
    <property type="project" value="UniProtKB-UniRule"/>
</dbReference>
<dbReference type="CDD" id="cd05401">
    <property type="entry name" value="NT_GlnE_GlnD_like"/>
    <property type="match status" value="2"/>
</dbReference>
<dbReference type="FunFam" id="1.10.4050.10:FF:000001">
    <property type="entry name" value="Bifunctional glutamine synthetase adenylyltransferase/adenylyl-removing enzyme"/>
    <property type="match status" value="1"/>
</dbReference>
<dbReference type="FunFam" id="1.20.120.1510:FF:000001">
    <property type="entry name" value="Bifunctional glutamine synthetase adenylyltransferase/adenylyl-removing enzyme"/>
    <property type="match status" value="1"/>
</dbReference>
<dbReference type="FunFam" id="1.20.120.330:FF:000005">
    <property type="entry name" value="Bifunctional glutamine synthetase adenylyltransferase/adenylyl-removing enzyme"/>
    <property type="match status" value="1"/>
</dbReference>
<dbReference type="FunFam" id="1.20.120.330:FF:000008">
    <property type="entry name" value="Bifunctional glutamine synthetase adenylyltransferase/adenylyl-removing enzyme"/>
    <property type="match status" value="1"/>
</dbReference>
<dbReference type="FunFam" id="3.30.460.10:FF:000009">
    <property type="entry name" value="Bifunctional glutamine synthetase adenylyltransferase/adenylyl-removing enzyme"/>
    <property type="match status" value="1"/>
</dbReference>
<dbReference type="FunFam" id="3.30.460.10:FF:000014">
    <property type="entry name" value="Bifunctional glutamine synthetase adenylyltransferase/adenylyl-removing enzyme"/>
    <property type="match status" value="1"/>
</dbReference>
<dbReference type="Gene3D" id="1.20.120.1510">
    <property type="match status" value="1"/>
</dbReference>
<dbReference type="Gene3D" id="3.30.460.10">
    <property type="entry name" value="Beta Polymerase, domain 2"/>
    <property type="match status" value="2"/>
</dbReference>
<dbReference type="Gene3D" id="1.10.4050.10">
    <property type="entry name" value="Glutamine synthase adenylyltransferase GlnE"/>
    <property type="match status" value="1"/>
</dbReference>
<dbReference type="Gene3D" id="1.20.120.330">
    <property type="entry name" value="Nucleotidyltransferases domain 2"/>
    <property type="match status" value="2"/>
</dbReference>
<dbReference type="HAMAP" id="MF_00802">
    <property type="entry name" value="GlnE"/>
    <property type="match status" value="1"/>
</dbReference>
<dbReference type="InterPro" id="IPR023057">
    <property type="entry name" value="GlnE"/>
</dbReference>
<dbReference type="InterPro" id="IPR005190">
    <property type="entry name" value="GlnE_rpt_dom"/>
</dbReference>
<dbReference type="InterPro" id="IPR043519">
    <property type="entry name" value="NT_sf"/>
</dbReference>
<dbReference type="InterPro" id="IPR013546">
    <property type="entry name" value="PII_UdlTrfase/GS_AdlTrfase"/>
</dbReference>
<dbReference type="NCBIfam" id="NF008292">
    <property type="entry name" value="PRK11072.1"/>
    <property type="match status" value="1"/>
</dbReference>
<dbReference type="PANTHER" id="PTHR30621:SF0">
    <property type="entry name" value="BIFUNCTIONAL GLUTAMINE SYNTHETASE ADENYLYLTRANSFERASE_ADENYLYL-REMOVING ENZYME"/>
    <property type="match status" value="1"/>
</dbReference>
<dbReference type="PANTHER" id="PTHR30621">
    <property type="entry name" value="GLUTAMINE SYNTHETASE ADENYLYLTRANSFERASE"/>
    <property type="match status" value="1"/>
</dbReference>
<dbReference type="Pfam" id="PF08335">
    <property type="entry name" value="GlnD_UR_UTase"/>
    <property type="match status" value="2"/>
</dbReference>
<dbReference type="Pfam" id="PF03710">
    <property type="entry name" value="GlnE"/>
    <property type="match status" value="2"/>
</dbReference>
<dbReference type="SUPFAM" id="SSF81301">
    <property type="entry name" value="Nucleotidyltransferase"/>
    <property type="match status" value="2"/>
</dbReference>
<dbReference type="SUPFAM" id="SSF81593">
    <property type="entry name" value="Nucleotidyltransferase substrate binding subunit/domain"/>
    <property type="match status" value="2"/>
</dbReference>
<proteinExistence type="inferred from homology"/>
<name>GLNE_ECO7I</name>
<protein>
    <recommendedName>
        <fullName evidence="1">Bifunctional glutamine synthetase adenylyltransferase/adenylyl-removing enzyme</fullName>
    </recommendedName>
    <alternativeName>
        <fullName evidence="1">ATP:glutamine synthetase adenylyltransferase</fullName>
    </alternativeName>
    <alternativeName>
        <fullName evidence="1">ATase</fullName>
    </alternativeName>
    <domain>
        <recommendedName>
            <fullName evidence="1">Glutamine synthetase adenylyl-L-tyrosine phosphorylase</fullName>
            <ecNumber evidence="1">2.7.7.89</ecNumber>
        </recommendedName>
        <alternativeName>
            <fullName evidence="1">Adenylyl removase</fullName>
            <shortName evidence="1">AR</shortName>
            <shortName evidence="1">AT-N</shortName>
        </alternativeName>
    </domain>
    <domain>
        <recommendedName>
            <fullName evidence="1">Glutamine synthetase adenylyl transferase</fullName>
            <ecNumber evidence="1">2.7.7.42</ecNumber>
        </recommendedName>
        <alternativeName>
            <fullName evidence="1">Adenylyl transferase</fullName>
            <shortName evidence="1">AT</shortName>
            <shortName evidence="1">AT-C</shortName>
        </alternativeName>
    </domain>
</protein>
<organism>
    <name type="scientific">Escherichia coli O7:K1 (strain IAI39 / ExPEC)</name>
    <dbReference type="NCBI Taxonomy" id="585057"/>
    <lineage>
        <taxon>Bacteria</taxon>
        <taxon>Pseudomonadati</taxon>
        <taxon>Pseudomonadota</taxon>
        <taxon>Gammaproteobacteria</taxon>
        <taxon>Enterobacterales</taxon>
        <taxon>Enterobacteriaceae</taxon>
        <taxon>Escherichia</taxon>
    </lineage>
</organism>
<gene>
    <name evidence="1" type="primary">glnE</name>
    <name type="ordered locus">ECIAI39_3549</name>
</gene>
<keyword id="KW-0067">ATP-binding</keyword>
<keyword id="KW-0460">Magnesium</keyword>
<keyword id="KW-0511">Multifunctional enzyme</keyword>
<keyword id="KW-0547">Nucleotide-binding</keyword>
<keyword id="KW-0548">Nucleotidyltransferase</keyword>
<keyword id="KW-0808">Transferase</keyword>
<reference key="1">
    <citation type="journal article" date="2009" name="PLoS Genet.">
        <title>Organised genome dynamics in the Escherichia coli species results in highly diverse adaptive paths.</title>
        <authorList>
            <person name="Touchon M."/>
            <person name="Hoede C."/>
            <person name="Tenaillon O."/>
            <person name="Barbe V."/>
            <person name="Baeriswyl S."/>
            <person name="Bidet P."/>
            <person name="Bingen E."/>
            <person name="Bonacorsi S."/>
            <person name="Bouchier C."/>
            <person name="Bouvet O."/>
            <person name="Calteau A."/>
            <person name="Chiapello H."/>
            <person name="Clermont O."/>
            <person name="Cruveiller S."/>
            <person name="Danchin A."/>
            <person name="Diard M."/>
            <person name="Dossat C."/>
            <person name="Karoui M.E."/>
            <person name="Frapy E."/>
            <person name="Garry L."/>
            <person name="Ghigo J.M."/>
            <person name="Gilles A.M."/>
            <person name="Johnson J."/>
            <person name="Le Bouguenec C."/>
            <person name="Lescat M."/>
            <person name="Mangenot S."/>
            <person name="Martinez-Jehanne V."/>
            <person name="Matic I."/>
            <person name="Nassif X."/>
            <person name="Oztas S."/>
            <person name="Petit M.A."/>
            <person name="Pichon C."/>
            <person name="Rouy Z."/>
            <person name="Ruf C.S."/>
            <person name="Schneider D."/>
            <person name="Tourret J."/>
            <person name="Vacherie B."/>
            <person name="Vallenet D."/>
            <person name="Medigue C."/>
            <person name="Rocha E.P.C."/>
            <person name="Denamur E."/>
        </authorList>
    </citation>
    <scope>NUCLEOTIDE SEQUENCE [LARGE SCALE GENOMIC DNA]</scope>
    <source>
        <strain>IAI39 / ExPEC</strain>
    </source>
</reference>
<feature type="chain" id="PRO_1000133899" description="Bifunctional glutamine synthetase adenylyltransferase/adenylyl-removing enzyme">
    <location>
        <begin position="1"/>
        <end position="946"/>
    </location>
</feature>
<feature type="region of interest" description="Adenylyl removase" evidence="1">
    <location>
        <begin position="1"/>
        <end position="440"/>
    </location>
</feature>
<feature type="region of interest" description="Adenylyl transferase" evidence="1">
    <location>
        <begin position="449"/>
        <end position="946"/>
    </location>
</feature>
<evidence type="ECO:0000255" key="1">
    <source>
        <dbReference type="HAMAP-Rule" id="MF_00802"/>
    </source>
</evidence>
<comment type="function">
    <text evidence="1">Involved in the regulation of glutamine synthetase GlnA, a key enzyme in the process to assimilate ammonia. When cellular nitrogen levels are high, the C-terminal adenylyl transferase (AT) inactivates GlnA by covalent transfer of an adenylyl group from ATP to specific tyrosine residue of GlnA, thus reducing its activity. Conversely, when nitrogen levels are low, the N-terminal adenylyl removase (AR) activates GlnA by removing the adenylyl group by phosphorolysis, increasing its activity. The regulatory region of GlnE binds the signal transduction protein PII (GlnB) which indicates the nitrogen status of the cell.</text>
</comment>
<comment type="catalytic activity">
    <reaction evidence="1">
        <text>[glutamine synthetase]-O(4)-(5'-adenylyl)-L-tyrosine + phosphate = [glutamine synthetase]-L-tyrosine + ADP</text>
        <dbReference type="Rhea" id="RHEA:43716"/>
        <dbReference type="Rhea" id="RHEA-COMP:10660"/>
        <dbReference type="Rhea" id="RHEA-COMP:10661"/>
        <dbReference type="ChEBI" id="CHEBI:43474"/>
        <dbReference type="ChEBI" id="CHEBI:46858"/>
        <dbReference type="ChEBI" id="CHEBI:83624"/>
        <dbReference type="ChEBI" id="CHEBI:456216"/>
        <dbReference type="EC" id="2.7.7.89"/>
    </reaction>
</comment>
<comment type="catalytic activity">
    <reaction evidence="1">
        <text>[glutamine synthetase]-L-tyrosine + ATP = [glutamine synthetase]-O(4)-(5'-adenylyl)-L-tyrosine + diphosphate</text>
        <dbReference type="Rhea" id="RHEA:18589"/>
        <dbReference type="Rhea" id="RHEA-COMP:10660"/>
        <dbReference type="Rhea" id="RHEA-COMP:10661"/>
        <dbReference type="ChEBI" id="CHEBI:30616"/>
        <dbReference type="ChEBI" id="CHEBI:33019"/>
        <dbReference type="ChEBI" id="CHEBI:46858"/>
        <dbReference type="ChEBI" id="CHEBI:83624"/>
        <dbReference type="EC" id="2.7.7.42"/>
    </reaction>
</comment>
<comment type="cofactor">
    <cofactor evidence="1">
        <name>Mg(2+)</name>
        <dbReference type="ChEBI" id="CHEBI:18420"/>
    </cofactor>
</comment>
<comment type="similarity">
    <text evidence="1">Belongs to the GlnE family.</text>
</comment>
<accession>B7NJR6</accession>
<sequence length="946" mass="108418">MKPLSSPLQQYWQTVVERLPEPLAEESLSAQAKSVLTFSDFVQDSISAHPEWLTELESQPPQADEWQHYVAWLQEALSNVSDEAGLMRELRLFRRRIMVRIAWAQTLALVTEESILQQLSYLAETLIVAARDWLYDACCREWGTPCNAQGEAQPLLILGMGKLGGGELNFSSDIDLIFAWPEHGCTQGGRRELDNAQFFTRMGQRLIKVLDQPTQDGFVYRVDMRLRPFGESGPLVLSFAALEDYYQEQGRDWERYAMVKARIMGDSEGVYANELRAMLRPFVFRRYIDFSVIQSLRNMKGMIAREVRRRGLTDNIKLGAGGIREIEFIVQVFQLIRGGREPSLQSRSLLPTLSAIAELHLLSENDAEQLRVAYLFLRRLENLLQSINDEQTQTLPSDELNRARLAWAMDFADWPQLTGALTAHMTNVRRVFNELIGDDESETQEESLSEQWRELWQDALQEDDTTPVLAHLSEDDRKQVLTLIADFRKELDKRTIGPRGRQVLDHLMPHLLSDVCAREDAAVTLSRITALLVGIVTRTTYLELLSEFPAALKHLISLCAASPMIASQLARYPLLLDELLDPNTLYQPTATDAYRDELRQYLLRVPEDDEEQQLEALRQFKQAQLLRIAAADIAGTLPVMKVSDHLTWLAEAMIDAVVQQAWVQMVARYGKPNHLNEREGRGFAVVGYGKLGGWELGYSSDLDLIFLHDCPMDAMTDGEREIDGRQFYLRLAQRIMHLFSTRTSSGILYEVDARLRPSGAAGMLVTSAEAFADYQKNEAWTWEHQALVRARVVYGDPQLTAHFDAVRREIMTLPREGKTLQTEVREMREKMRAHLGNKHRDRFDIKADEGGITDIEFITQYLVLRYAHEKPKLTRWSDNVRILELLAQNDIMEEQEAMALTRAYTTLRDELHHLALQELPGHVSEDCFTAERELVRASWQKWLVEE</sequence>